<gene>
    <name evidence="1" type="primary">glnD</name>
    <name type="ordered locus">CKO_03202</name>
</gene>
<name>GLND_CITK8</name>
<dbReference type="EC" id="2.7.7.59" evidence="1"/>
<dbReference type="EC" id="3.1.4.-" evidence="1"/>
<dbReference type="EMBL" id="CP000822">
    <property type="protein sequence ID" value="ABV14286.1"/>
    <property type="molecule type" value="Genomic_DNA"/>
</dbReference>
<dbReference type="RefSeq" id="WP_012133992.1">
    <property type="nucleotide sequence ID" value="NC_009792.1"/>
</dbReference>
<dbReference type="SMR" id="A8ALC3"/>
<dbReference type="STRING" id="290338.CKO_03202"/>
<dbReference type="GeneID" id="45136984"/>
<dbReference type="KEGG" id="cko:CKO_03202"/>
<dbReference type="HOGENOM" id="CLU_012833_0_0_6"/>
<dbReference type="OrthoDB" id="9758038at2"/>
<dbReference type="Proteomes" id="UP000008148">
    <property type="component" value="Chromosome"/>
</dbReference>
<dbReference type="GO" id="GO:0008773">
    <property type="term" value="F:[protein-PII] uridylyltransferase activity"/>
    <property type="evidence" value="ECO:0007669"/>
    <property type="project" value="UniProtKB-UniRule"/>
</dbReference>
<dbReference type="GO" id="GO:0008081">
    <property type="term" value="F:phosphoric diester hydrolase activity"/>
    <property type="evidence" value="ECO:0007669"/>
    <property type="project" value="UniProtKB-UniRule"/>
</dbReference>
<dbReference type="GO" id="GO:0006808">
    <property type="term" value="P:regulation of nitrogen utilization"/>
    <property type="evidence" value="ECO:0007669"/>
    <property type="project" value="UniProtKB-UniRule"/>
</dbReference>
<dbReference type="CDD" id="cd04899">
    <property type="entry name" value="ACT_ACR-UUR-like_2"/>
    <property type="match status" value="1"/>
</dbReference>
<dbReference type="CDD" id="cd04900">
    <property type="entry name" value="ACT_UUR-like_1"/>
    <property type="match status" value="1"/>
</dbReference>
<dbReference type="CDD" id="cd00077">
    <property type="entry name" value="HDc"/>
    <property type="match status" value="1"/>
</dbReference>
<dbReference type="CDD" id="cd05401">
    <property type="entry name" value="NT_GlnE_GlnD_like"/>
    <property type="match status" value="1"/>
</dbReference>
<dbReference type="FunFam" id="1.10.3210.10:FF:000005">
    <property type="entry name" value="Bifunctional uridylyltransferase/uridylyl-removing enzyme"/>
    <property type="match status" value="1"/>
</dbReference>
<dbReference type="Gene3D" id="1.10.3210.10">
    <property type="entry name" value="Hypothetical protein af1432"/>
    <property type="match status" value="1"/>
</dbReference>
<dbReference type="HAMAP" id="MF_00277">
    <property type="entry name" value="PII_uridylyl_transf"/>
    <property type="match status" value="1"/>
</dbReference>
<dbReference type="InterPro" id="IPR045865">
    <property type="entry name" value="ACT-like_dom_sf"/>
</dbReference>
<dbReference type="InterPro" id="IPR002912">
    <property type="entry name" value="ACT_dom"/>
</dbReference>
<dbReference type="InterPro" id="IPR003607">
    <property type="entry name" value="HD/PDEase_dom"/>
</dbReference>
<dbReference type="InterPro" id="IPR006674">
    <property type="entry name" value="HD_domain"/>
</dbReference>
<dbReference type="InterPro" id="IPR043519">
    <property type="entry name" value="NT_sf"/>
</dbReference>
<dbReference type="InterPro" id="IPR013546">
    <property type="entry name" value="PII_UdlTrfase/GS_AdlTrfase"/>
</dbReference>
<dbReference type="InterPro" id="IPR002934">
    <property type="entry name" value="Polymerase_NTP_transf_dom"/>
</dbReference>
<dbReference type="InterPro" id="IPR010043">
    <property type="entry name" value="UTase/UR"/>
</dbReference>
<dbReference type="NCBIfam" id="NF002487">
    <property type="entry name" value="PRK01759.1"/>
    <property type="match status" value="1"/>
</dbReference>
<dbReference type="NCBIfam" id="NF003448">
    <property type="entry name" value="PRK05007.1"/>
    <property type="match status" value="1"/>
</dbReference>
<dbReference type="NCBIfam" id="TIGR01693">
    <property type="entry name" value="UTase_glnD"/>
    <property type="match status" value="1"/>
</dbReference>
<dbReference type="PANTHER" id="PTHR47320">
    <property type="entry name" value="BIFUNCTIONAL URIDYLYLTRANSFERASE/URIDYLYL-REMOVING ENZYME"/>
    <property type="match status" value="1"/>
</dbReference>
<dbReference type="PANTHER" id="PTHR47320:SF1">
    <property type="entry name" value="BIFUNCTIONAL URIDYLYLTRANSFERASE_URIDYLYL-REMOVING ENZYME"/>
    <property type="match status" value="1"/>
</dbReference>
<dbReference type="Pfam" id="PF01842">
    <property type="entry name" value="ACT"/>
    <property type="match status" value="2"/>
</dbReference>
<dbReference type="Pfam" id="PF08335">
    <property type="entry name" value="GlnD_UR_UTase"/>
    <property type="match status" value="1"/>
</dbReference>
<dbReference type="Pfam" id="PF01966">
    <property type="entry name" value="HD"/>
    <property type="match status" value="1"/>
</dbReference>
<dbReference type="Pfam" id="PF01909">
    <property type="entry name" value="NTP_transf_2"/>
    <property type="match status" value="1"/>
</dbReference>
<dbReference type="PIRSF" id="PIRSF006288">
    <property type="entry name" value="PII_uridyltransf"/>
    <property type="match status" value="1"/>
</dbReference>
<dbReference type="SMART" id="SM00471">
    <property type="entry name" value="HDc"/>
    <property type="match status" value="1"/>
</dbReference>
<dbReference type="SUPFAM" id="SSF55021">
    <property type="entry name" value="ACT-like"/>
    <property type="match status" value="2"/>
</dbReference>
<dbReference type="SUPFAM" id="SSF109604">
    <property type="entry name" value="HD-domain/PDEase-like"/>
    <property type="match status" value="1"/>
</dbReference>
<dbReference type="SUPFAM" id="SSF81301">
    <property type="entry name" value="Nucleotidyltransferase"/>
    <property type="match status" value="1"/>
</dbReference>
<dbReference type="SUPFAM" id="SSF81593">
    <property type="entry name" value="Nucleotidyltransferase substrate binding subunit/domain"/>
    <property type="match status" value="1"/>
</dbReference>
<dbReference type="PROSITE" id="PS51671">
    <property type="entry name" value="ACT"/>
    <property type="match status" value="2"/>
</dbReference>
<dbReference type="PROSITE" id="PS51831">
    <property type="entry name" value="HD"/>
    <property type="match status" value="1"/>
</dbReference>
<protein>
    <recommendedName>
        <fullName evidence="1">Bifunctional uridylyltransferase/uridylyl-removing enzyme</fullName>
        <shortName evidence="1">UTase/UR</shortName>
    </recommendedName>
    <alternativeName>
        <fullName evidence="1">Bifunctional [protein-PII] modification enzyme</fullName>
    </alternativeName>
    <alternativeName>
        <fullName evidence="1">Bifunctional nitrogen sensor protein</fullName>
    </alternativeName>
    <domain>
        <recommendedName>
            <fullName evidence="1">[Protein-PII] uridylyltransferase</fullName>
            <shortName evidence="1">PII uridylyltransferase</shortName>
            <shortName evidence="1">UTase</shortName>
            <ecNumber evidence="1">2.7.7.59</ecNumber>
        </recommendedName>
    </domain>
    <domain>
        <recommendedName>
            <fullName evidence="1">[Protein-PII]-UMP uridylyl-removing enzyme</fullName>
            <shortName evidence="1">UR</shortName>
            <ecNumber evidence="1">3.1.4.-</ecNumber>
        </recommendedName>
    </domain>
</protein>
<feature type="chain" id="PRO_1000022338" description="Bifunctional uridylyltransferase/uridylyl-removing enzyme">
    <location>
        <begin position="1"/>
        <end position="890"/>
    </location>
</feature>
<feature type="domain" description="HD" evidence="2">
    <location>
        <begin position="468"/>
        <end position="590"/>
    </location>
</feature>
<feature type="domain" description="ACT 1" evidence="1">
    <location>
        <begin position="709"/>
        <end position="789"/>
    </location>
</feature>
<feature type="domain" description="ACT 2" evidence="1">
    <location>
        <begin position="816"/>
        <end position="890"/>
    </location>
</feature>
<feature type="region of interest" description="Uridylyltransferase">
    <location>
        <begin position="1"/>
        <end position="349"/>
    </location>
</feature>
<feature type="region of interest" description="Disordered" evidence="3">
    <location>
        <begin position="1"/>
        <end position="26"/>
    </location>
</feature>
<feature type="region of interest" description="Uridylyl-removing">
    <location>
        <begin position="350"/>
        <end position="708"/>
    </location>
</feature>
<feature type="compositionally biased region" description="Polar residues" evidence="3">
    <location>
        <begin position="1"/>
        <end position="24"/>
    </location>
</feature>
<evidence type="ECO:0000255" key="1">
    <source>
        <dbReference type="HAMAP-Rule" id="MF_00277"/>
    </source>
</evidence>
<evidence type="ECO:0000255" key="2">
    <source>
        <dbReference type="PROSITE-ProRule" id="PRU01175"/>
    </source>
</evidence>
<evidence type="ECO:0000256" key="3">
    <source>
        <dbReference type="SAM" id="MobiDB-lite"/>
    </source>
</evidence>
<keyword id="KW-0378">Hydrolase</keyword>
<keyword id="KW-0460">Magnesium</keyword>
<keyword id="KW-0511">Multifunctional enzyme</keyword>
<keyword id="KW-0548">Nucleotidyltransferase</keyword>
<keyword id="KW-1185">Reference proteome</keyword>
<keyword id="KW-0677">Repeat</keyword>
<keyword id="KW-0808">Transferase</keyword>
<sequence length="890" mass="102311">MNTLPEQHANTALPTLPGQPQNPGAWSRDELTVSGIKAHIDIFQQWLGDAFDSGISAEQLIEARTEFIDQLLQRLWIDAGFGQIADLALVAVGGYGRGELHPLSDIDLLILSRKKLPDAQAQKVGELLTLLWDVKLEVGHSVRTLEECLLEGLSDLTVATNLIETRLLIGDVALFLELQKHIFSEGFWPSEKFFAAKVEEQNQRHQRYHGTSYNLEPDIKSSPGGLRDIHTLQWVARRHFGATSLNEMVGFGFLTQAERAELNECLHILWRIRFALHLVVSRYDNRLLFDRQLSVAQRLNYTGEGNEPVEHMMKDYFRVTRRVSELNQMLLQLFDEAILALPADEKPRPIDDDFQLRGTLIDLRDDDLFIRSPEAILRMFYMMVRNSTITGIYSTTLRHLRHARRHLTQPLCYIPEARSLFLSMLRHPGAVSRGLLPMHRHSVLWAYMPQWSHIVGQMQFDLFHAYTVDEHTIRVMLKLESFAKEETRQRHPLCVDLWPRLRQPELILIAALFHDIAKGRGGDHSVLGAQDVLKFAELHGLNSRETQLVAWLVRQHLLMSVTAQRRDIQDPEVIKQFAEEVQTEHRLRFLVCLTVADICATNETLWNSWKQSLLRELYFATEKQLRRGMQNTPDMRERVRHHQLQALALLRMDNINEEALHQIWTRCRANYFVRHSPNQLAWHARHLLQHDLTRPLILVSPQATRGGTEIFIWSPDRPYLFAAVCAELDRRNLSVHDAQIFTTRDGMAMDTFIVLEPDGSPLSADRHEAIRFGLEQAITQSSWQPPQPRRQPAKLRHFTVDTEVTFLPTHTDRKSFLELIALDQPGLLARVGQIFADLGISLHGARITTIGERVEDLFIIATADRRALNNELQQEVHQRLTAALNPNDKG</sequence>
<comment type="function">
    <text evidence="1">Modifies, by uridylylation and deuridylylation, the PII regulatory proteins (GlnB and homologs), in response to the nitrogen status of the cell that GlnD senses through the glutamine level. Under low glutamine levels, catalyzes the conversion of the PII proteins and UTP to PII-UMP and PPi, while under higher glutamine levels, GlnD hydrolyzes PII-UMP to PII and UMP (deuridylylation). Thus, controls uridylylation state and activity of the PII proteins, and plays an important role in the regulation of nitrogen assimilation and metabolism.</text>
</comment>
<comment type="catalytic activity">
    <reaction evidence="1">
        <text>[protein-PII]-L-tyrosine + UTP = [protein-PII]-uridylyl-L-tyrosine + diphosphate</text>
        <dbReference type="Rhea" id="RHEA:13673"/>
        <dbReference type="Rhea" id="RHEA-COMP:12147"/>
        <dbReference type="Rhea" id="RHEA-COMP:12148"/>
        <dbReference type="ChEBI" id="CHEBI:33019"/>
        <dbReference type="ChEBI" id="CHEBI:46398"/>
        <dbReference type="ChEBI" id="CHEBI:46858"/>
        <dbReference type="ChEBI" id="CHEBI:90602"/>
        <dbReference type="EC" id="2.7.7.59"/>
    </reaction>
</comment>
<comment type="catalytic activity">
    <reaction evidence="1">
        <text>[protein-PII]-uridylyl-L-tyrosine + H2O = [protein-PII]-L-tyrosine + UMP + H(+)</text>
        <dbReference type="Rhea" id="RHEA:48600"/>
        <dbReference type="Rhea" id="RHEA-COMP:12147"/>
        <dbReference type="Rhea" id="RHEA-COMP:12148"/>
        <dbReference type="ChEBI" id="CHEBI:15377"/>
        <dbReference type="ChEBI" id="CHEBI:15378"/>
        <dbReference type="ChEBI" id="CHEBI:46858"/>
        <dbReference type="ChEBI" id="CHEBI:57865"/>
        <dbReference type="ChEBI" id="CHEBI:90602"/>
    </reaction>
</comment>
<comment type="cofactor">
    <cofactor evidence="1">
        <name>Mg(2+)</name>
        <dbReference type="ChEBI" id="CHEBI:18420"/>
    </cofactor>
</comment>
<comment type="activity regulation">
    <text evidence="1">Uridylyltransferase (UTase) activity is inhibited by glutamine, while glutamine activates uridylyl-removing (UR) activity.</text>
</comment>
<comment type="domain">
    <text evidence="1">Has four distinct domains: an N-terminal nucleotidyltransferase (NT) domain responsible for UTase activity, a central HD domain that encodes UR activity, and two C-terminal ACT domains that seem to have a role in glutamine sensing.</text>
</comment>
<comment type="similarity">
    <text evidence="1">Belongs to the GlnD family.</text>
</comment>
<organism>
    <name type="scientific">Citrobacter koseri (strain ATCC BAA-895 / CDC 4225-83 / SGSC4696)</name>
    <dbReference type="NCBI Taxonomy" id="290338"/>
    <lineage>
        <taxon>Bacteria</taxon>
        <taxon>Pseudomonadati</taxon>
        <taxon>Pseudomonadota</taxon>
        <taxon>Gammaproteobacteria</taxon>
        <taxon>Enterobacterales</taxon>
        <taxon>Enterobacteriaceae</taxon>
        <taxon>Citrobacter</taxon>
    </lineage>
</organism>
<accession>A8ALC3</accession>
<proteinExistence type="inferred from homology"/>
<reference key="1">
    <citation type="submission" date="2007-08" db="EMBL/GenBank/DDBJ databases">
        <authorList>
            <consortium name="The Citrobacter koseri Genome Sequencing Project"/>
            <person name="McClelland M."/>
            <person name="Sanderson E.K."/>
            <person name="Porwollik S."/>
            <person name="Spieth J."/>
            <person name="Clifton W.S."/>
            <person name="Latreille P."/>
            <person name="Courtney L."/>
            <person name="Wang C."/>
            <person name="Pepin K."/>
            <person name="Bhonagiri V."/>
            <person name="Nash W."/>
            <person name="Johnson M."/>
            <person name="Thiruvilangam P."/>
            <person name="Wilson R."/>
        </authorList>
    </citation>
    <scope>NUCLEOTIDE SEQUENCE [LARGE SCALE GENOMIC DNA]</scope>
    <source>
        <strain>ATCC BAA-895 / CDC 4225-83 / SGSC4696</strain>
    </source>
</reference>